<accession>C0Q5R5</accession>
<organism>
    <name type="scientific">Salmonella paratyphi C (strain RKS4594)</name>
    <dbReference type="NCBI Taxonomy" id="476213"/>
    <lineage>
        <taxon>Bacteria</taxon>
        <taxon>Pseudomonadati</taxon>
        <taxon>Pseudomonadota</taxon>
        <taxon>Gammaproteobacteria</taxon>
        <taxon>Enterobacterales</taxon>
        <taxon>Enterobacteriaceae</taxon>
        <taxon>Salmonella</taxon>
    </lineage>
</organism>
<proteinExistence type="inferred from homology"/>
<keyword id="KW-0963">Cytoplasm</keyword>
<keyword id="KW-0413">Isomerase</keyword>
<keyword id="KW-0627">Porphyrin biosynthesis</keyword>
<keyword id="KW-0663">Pyridoxal phosphate</keyword>
<reference key="1">
    <citation type="journal article" date="2009" name="PLoS ONE">
        <title>Salmonella paratyphi C: genetic divergence from Salmonella choleraesuis and pathogenic convergence with Salmonella typhi.</title>
        <authorList>
            <person name="Liu W.-Q."/>
            <person name="Feng Y."/>
            <person name="Wang Y."/>
            <person name="Zou Q.-H."/>
            <person name="Chen F."/>
            <person name="Guo J.-T."/>
            <person name="Peng Y.-H."/>
            <person name="Jin Y."/>
            <person name="Li Y.-G."/>
            <person name="Hu S.-N."/>
            <person name="Johnston R.N."/>
            <person name="Liu G.-R."/>
            <person name="Liu S.-L."/>
        </authorList>
    </citation>
    <scope>NUCLEOTIDE SEQUENCE [LARGE SCALE GENOMIC DNA]</scope>
    <source>
        <strain>RKS4594</strain>
    </source>
</reference>
<evidence type="ECO:0000255" key="1">
    <source>
        <dbReference type="HAMAP-Rule" id="MF_00375"/>
    </source>
</evidence>
<name>GSA_SALPC</name>
<sequence length="426" mass="45410">MSKSENLYSAARELIPGGVNSPVRAFTGVGGTPLFIEKADGAYLYDVDGKAYIDYVGSWGPMVLGHNHPAIRNAVIEAAERGLSFGAPTEMEVKMAELVTNLVPTMDMVRMVNSGTEATMSAIRLARGFTGRDKIIKFEGCYHGHADCLLVKAGSGALTLGQPNSPGVPADFAKHTLTCTYNDLTSVRAAFEQYPQEIACIIVEPVAGNMNCVPPLPEFLPGLRALCDEFGALLIIDEVMTGFRVALAGAQDYYGVVPDLTCLGKIIGGGMPVGAFGGRRDVMDALAPTGPVYQAGTLSGNPIAMAAGFACLNEVAQPGIHETLDELTTRLAEGLCEAAQEVGIPLVVNHVGGMFGIFFTDAETVTCYQDVMACDVERFKRFFHLMLEEGVYLAPSAFEAGFMSVAHSEEDINNTIDAARRVFAKQ</sequence>
<gene>
    <name evidence="1" type="primary">hemL</name>
    <name type="ordered locus">SPC_0218</name>
</gene>
<comment type="catalytic activity">
    <reaction evidence="1">
        <text>(S)-4-amino-5-oxopentanoate = 5-aminolevulinate</text>
        <dbReference type="Rhea" id="RHEA:14265"/>
        <dbReference type="ChEBI" id="CHEBI:57501"/>
        <dbReference type="ChEBI" id="CHEBI:356416"/>
        <dbReference type="EC" id="5.4.3.8"/>
    </reaction>
</comment>
<comment type="cofactor">
    <cofactor evidence="1">
        <name>pyridoxal 5'-phosphate</name>
        <dbReference type="ChEBI" id="CHEBI:597326"/>
    </cofactor>
</comment>
<comment type="pathway">
    <text evidence="1">Porphyrin-containing compound metabolism; protoporphyrin-IX biosynthesis; 5-aminolevulinate from L-glutamyl-tRNA(Glu): step 2/2.</text>
</comment>
<comment type="subunit">
    <text evidence="1">Homodimer.</text>
</comment>
<comment type="subcellular location">
    <subcellularLocation>
        <location evidence="1">Cytoplasm</location>
    </subcellularLocation>
</comment>
<comment type="similarity">
    <text evidence="1">Belongs to the class-III pyridoxal-phosphate-dependent aminotransferase family. HemL subfamily.</text>
</comment>
<feature type="chain" id="PRO_1000201033" description="Glutamate-1-semialdehyde 2,1-aminomutase">
    <location>
        <begin position="1"/>
        <end position="426"/>
    </location>
</feature>
<feature type="modified residue" description="N6-(pyridoxal phosphate)lysine" evidence="1">
    <location>
        <position position="265"/>
    </location>
</feature>
<protein>
    <recommendedName>
        <fullName evidence="1">Glutamate-1-semialdehyde 2,1-aminomutase</fullName>
        <shortName evidence="1">GSA</shortName>
        <ecNumber evidence="1">5.4.3.8</ecNumber>
    </recommendedName>
    <alternativeName>
        <fullName evidence="1">Glutamate-1-semialdehyde aminotransferase</fullName>
        <shortName evidence="1">GSA-AT</shortName>
    </alternativeName>
</protein>
<dbReference type="EC" id="5.4.3.8" evidence="1"/>
<dbReference type="EMBL" id="CP000857">
    <property type="protein sequence ID" value="ACN44407.1"/>
    <property type="molecule type" value="Genomic_DNA"/>
</dbReference>
<dbReference type="RefSeq" id="WP_000045260.1">
    <property type="nucleotide sequence ID" value="NC_012125.1"/>
</dbReference>
<dbReference type="SMR" id="C0Q5R5"/>
<dbReference type="KEGG" id="sei:SPC_0218"/>
<dbReference type="HOGENOM" id="CLU_016922_1_5_6"/>
<dbReference type="UniPathway" id="UPA00251">
    <property type="reaction ID" value="UER00317"/>
</dbReference>
<dbReference type="Proteomes" id="UP000001599">
    <property type="component" value="Chromosome"/>
</dbReference>
<dbReference type="GO" id="GO:0005737">
    <property type="term" value="C:cytoplasm"/>
    <property type="evidence" value="ECO:0007669"/>
    <property type="project" value="UniProtKB-SubCell"/>
</dbReference>
<dbReference type="GO" id="GO:0042286">
    <property type="term" value="F:glutamate-1-semialdehyde 2,1-aminomutase activity"/>
    <property type="evidence" value="ECO:0007669"/>
    <property type="project" value="UniProtKB-UniRule"/>
</dbReference>
<dbReference type="GO" id="GO:0030170">
    <property type="term" value="F:pyridoxal phosphate binding"/>
    <property type="evidence" value="ECO:0007669"/>
    <property type="project" value="InterPro"/>
</dbReference>
<dbReference type="GO" id="GO:0008483">
    <property type="term" value="F:transaminase activity"/>
    <property type="evidence" value="ECO:0007669"/>
    <property type="project" value="InterPro"/>
</dbReference>
<dbReference type="GO" id="GO:0006782">
    <property type="term" value="P:protoporphyrinogen IX biosynthetic process"/>
    <property type="evidence" value="ECO:0007669"/>
    <property type="project" value="UniProtKB-UniRule"/>
</dbReference>
<dbReference type="CDD" id="cd00610">
    <property type="entry name" value="OAT_like"/>
    <property type="match status" value="1"/>
</dbReference>
<dbReference type="FunFam" id="3.40.640.10:FF:000021">
    <property type="entry name" value="Glutamate-1-semialdehyde 2,1-aminomutase"/>
    <property type="match status" value="1"/>
</dbReference>
<dbReference type="FunFam" id="3.90.1150.10:FF:000012">
    <property type="entry name" value="Glutamate-1-semialdehyde 2,1-aminomutase"/>
    <property type="match status" value="1"/>
</dbReference>
<dbReference type="Gene3D" id="3.90.1150.10">
    <property type="entry name" value="Aspartate Aminotransferase, domain 1"/>
    <property type="match status" value="1"/>
</dbReference>
<dbReference type="Gene3D" id="3.40.640.10">
    <property type="entry name" value="Type I PLP-dependent aspartate aminotransferase-like (Major domain)"/>
    <property type="match status" value="1"/>
</dbReference>
<dbReference type="HAMAP" id="MF_00375">
    <property type="entry name" value="HemL_aminotrans_3"/>
    <property type="match status" value="1"/>
</dbReference>
<dbReference type="InterPro" id="IPR004639">
    <property type="entry name" value="4pyrrol_synth_GluAld_NH2Trfase"/>
</dbReference>
<dbReference type="InterPro" id="IPR005814">
    <property type="entry name" value="Aminotrans_3"/>
</dbReference>
<dbReference type="InterPro" id="IPR049704">
    <property type="entry name" value="Aminotrans_3_PPA_site"/>
</dbReference>
<dbReference type="InterPro" id="IPR015424">
    <property type="entry name" value="PyrdxlP-dep_Trfase"/>
</dbReference>
<dbReference type="InterPro" id="IPR015421">
    <property type="entry name" value="PyrdxlP-dep_Trfase_major"/>
</dbReference>
<dbReference type="InterPro" id="IPR015422">
    <property type="entry name" value="PyrdxlP-dep_Trfase_small"/>
</dbReference>
<dbReference type="NCBIfam" id="TIGR00713">
    <property type="entry name" value="hemL"/>
    <property type="match status" value="1"/>
</dbReference>
<dbReference type="NCBIfam" id="NF000818">
    <property type="entry name" value="PRK00062.1"/>
    <property type="match status" value="1"/>
</dbReference>
<dbReference type="PANTHER" id="PTHR43713">
    <property type="entry name" value="GLUTAMATE-1-SEMIALDEHYDE 2,1-AMINOMUTASE"/>
    <property type="match status" value="1"/>
</dbReference>
<dbReference type="PANTHER" id="PTHR43713:SF3">
    <property type="entry name" value="GLUTAMATE-1-SEMIALDEHYDE 2,1-AMINOMUTASE 1, CHLOROPLASTIC-RELATED"/>
    <property type="match status" value="1"/>
</dbReference>
<dbReference type="Pfam" id="PF00202">
    <property type="entry name" value="Aminotran_3"/>
    <property type="match status" value="1"/>
</dbReference>
<dbReference type="SUPFAM" id="SSF53383">
    <property type="entry name" value="PLP-dependent transferases"/>
    <property type="match status" value="1"/>
</dbReference>
<dbReference type="PROSITE" id="PS00600">
    <property type="entry name" value="AA_TRANSFER_CLASS_3"/>
    <property type="match status" value="1"/>
</dbReference>